<keyword id="KW-1185">Reference proteome</keyword>
<keyword id="KW-0687">Ribonucleoprotein</keyword>
<keyword id="KW-0689">Ribosomal protein</keyword>
<keyword id="KW-0694">RNA-binding</keyword>
<keyword id="KW-0699">rRNA-binding</keyword>
<sequence length="248" mass="26572">MGKRLLVQRRGRGGSVFRNPGWKRLGPARYPPYNPEEFKNKVLVGVVKDLLHEPGRGAPLALVEFEDGTKMYMIPPEGLAVGQKIYYGAKAPAVLGSIVEIGNVPEGTIVSNIEIRPGDGGKLARSSGAYALVLAHSNGKTLIQLPSKKVKEVSSEARATIGMVAAGGRIEKPMLKAGKMWHWSRAKSFKYPTVRGKAMSAYAHPAGGGHHPKGLTPAPRNAPPGRKVGHIAPRRTGRKKGASRTPTQ</sequence>
<gene>
    <name evidence="1" type="primary">rpl2</name>
    <name type="ordered locus">Tpen_0227</name>
</gene>
<proteinExistence type="inferred from homology"/>
<name>RL2_THEPD</name>
<protein>
    <recommendedName>
        <fullName evidence="1">Large ribosomal subunit protein uL2</fullName>
    </recommendedName>
    <alternativeName>
        <fullName evidence="3">50S ribosomal protein L2</fullName>
    </alternativeName>
</protein>
<comment type="function">
    <text evidence="1">One of the primary rRNA binding proteins. Required for association of the 30S and 50S subunits to form the 70S ribosome, for tRNA binding and peptide bond formation. It has been suggested to have peptidyltransferase activity; this is somewhat controversial. Makes several contacts with the 16S rRNA in the 70S ribosome.</text>
</comment>
<comment type="subunit">
    <text evidence="1">Part of the 50S ribosomal subunit. Forms a bridge to the 30S subunit in the 70S ribosome.</text>
</comment>
<comment type="similarity">
    <text evidence="1">Belongs to the universal ribosomal protein uL2 family.</text>
</comment>
<dbReference type="EMBL" id="CP000505">
    <property type="protein sequence ID" value="ABL77637.1"/>
    <property type="molecule type" value="Genomic_DNA"/>
</dbReference>
<dbReference type="RefSeq" id="WP_011751902.1">
    <property type="nucleotide sequence ID" value="NC_008698.1"/>
</dbReference>
<dbReference type="SMR" id="A1RWQ7"/>
<dbReference type="STRING" id="368408.Tpen_0227"/>
<dbReference type="EnsemblBacteria" id="ABL77637">
    <property type="protein sequence ID" value="ABL77637"/>
    <property type="gene ID" value="Tpen_0227"/>
</dbReference>
<dbReference type="GeneID" id="4601217"/>
<dbReference type="KEGG" id="tpe:Tpen_0227"/>
<dbReference type="eggNOG" id="arCOG04067">
    <property type="taxonomic scope" value="Archaea"/>
</dbReference>
<dbReference type="HOGENOM" id="CLU_036235_0_1_2"/>
<dbReference type="OrthoDB" id="5987at2157"/>
<dbReference type="Proteomes" id="UP000000641">
    <property type="component" value="Chromosome"/>
</dbReference>
<dbReference type="GO" id="GO:0022625">
    <property type="term" value="C:cytosolic large ribosomal subunit"/>
    <property type="evidence" value="ECO:0007669"/>
    <property type="project" value="TreeGrafter"/>
</dbReference>
<dbReference type="GO" id="GO:0019843">
    <property type="term" value="F:rRNA binding"/>
    <property type="evidence" value="ECO:0007669"/>
    <property type="project" value="UniProtKB-UniRule"/>
</dbReference>
<dbReference type="GO" id="GO:0003735">
    <property type="term" value="F:structural constituent of ribosome"/>
    <property type="evidence" value="ECO:0007669"/>
    <property type="project" value="InterPro"/>
</dbReference>
<dbReference type="GO" id="GO:0002181">
    <property type="term" value="P:cytoplasmic translation"/>
    <property type="evidence" value="ECO:0007669"/>
    <property type="project" value="TreeGrafter"/>
</dbReference>
<dbReference type="FunFam" id="2.40.50.140:FF:000020">
    <property type="entry name" value="60S ribosomal protein L2"/>
    <property type="match status" value="1"/>
</dbReference>
<dbReference type="Gene3D" id="2.30.30.30">
    <property type="match status" value="1"/>
</dbReference>
<dbReference type="Gene3D" id="2.40.50.140">
    <property type="entry name" value="Nucleic acid-binding proteins"/>
    <property type="match status" value="1"/>
</dbReference>
<dbReference type="Gene3D" id="4.10.950.10">
    <property type="entry name" value="Ribosomal protein L2, domain 3"/>
    <property type="match status" value="1"/>
</dbReference>
<dbReference type="HAMAP" id="MF_01320_A">
    <property type="entry name" value="Ribosomal_uL2_A"/>
    <property type="match status" value="1"/>
</dbReference>
<dbReference type="InterPro" id="IPR012340">
    <property type="entry name" value="NA-bd_OB-fold"/>
</dbReference>
<dbReference type="InterPro" id="IPR014722">
    <property type="entry name" value="Rib_uL2_dom2"/>
</dbReference>
<dbReference type="InterPro" id="IPR002171">
    <property type="entry name" value="Ribosomal_uL2"/>
</dbReference>
<dbReference type="InterPro" id="IPR023672">
    <property type="entry name" value="Ribosomal_uL2_arc_euk"/>
</dbReference>
<dbReference type="InterPro" id="IPR022669">
    <property type="entry name" value="Ribosomal_uL2_C"/>
</dbReference>
<dbReference type="InterPro" id="IPR014726">
    <property type="entry name" value="Ribosomal_uL2_dom3"/>
</dbReference>
<dbReference type="InterPro" id="IPR022666">
    <property type="entry name" value="Ribosomal_uL2_RNA-bd_dom"/>
</dbReference>
<dbReference type="InterPro" id="IPR008991">
    <property type="entry name" value="Translation_prot_SH3-like_sf"/>
</dbReference>
<dbReference type="NCBIfam" id="NF007180">
    <property type="entry name" value="PRK09612.1"/>
    <property type="match status" value="1"/>
</dbReference>
<dbReference type="PANTHER" id="PTHR13691:SF16">
    <property type="entry name" value="LARGE RIBOSOMAL SUBUNIT PROTEIN UL2"/>
    <property type="match status" value="1"/>
</dbReference>
<dbReference type="PANTHER" id="PTHR13691">
    <property type="entry name" value="RIBOSOMAL PROTEIN L2"/>
    <property type="match status" value="1"/>
</dbReference>
<dbReference type="Pfam" id="PF00181">
    <property type="entry name" value="Ribosomal_L2"/>
    <property type="match status" value="1"/>
</dbReference>
<dbReference type="Pfam" id="PF03947">
    <property type="entry name" value="Ribosomal_L2_C"/>
    <property type="match status" value="1"/>
</dbReference>
<dbReference type="PIRSF" id="PIRSF002158">
    <property type="entry name" value="Ribosomal_L2"/>
    <property type="match status" value="1"/>
</dbReference>
<dbReference type="SMART" id="SM01383">
    <property type="entry name" value="Ribosomal_L2"/>
    <property type="match status" value="1"/>
</dbReference>
<dbReference type="SMART" id="SM01382">
    <property type="entry name" value="Ribosomal_L2_C"/>
    <property type="match status" value="1"/>
</dbReference>
<dbReference type="SUPFAM" id="SSF50249">
    <property type="entry name" value="Nucleic acid-binding proteins"/>
    <property type="match status" value="1"/>
</dbReference>
<dbReference type="SUPFAM" id="SSF50104">
    <property type="entry name" value="Translation proteins SH3-like domain"/>
    <property type="match status" value="1"/>
</dbReference>
<reference key="1">
    <citation type="journal article" date="2008" name="J. Bacteriol.">
        <title>Genome sequence of Thermofilum pendens reveals an exceptional loss of biosynthetic pathways without genome reduction.</title>
        <authorList>
            <person name="Anderson I."/>
            <person name="Rodriguez J."/>
            <person name="Susanti D."/>
            <person name="Porat I."/>
            <person name="Reich C."/>
            <person name="Ulrich L.E."/>
            <person name="Elkins J.G."/>
            <person name="Mavromatis K."/>
            <person name="Lykidis A."/>
            <person name="Kim E."/>
            <person name="Thompson L.S."/>
            <person name="Nolan M."/>
            <person name="Land M."/>
            <person name="Copeland A."/>
            <person name="Lapidus A."/>
            <person name="Lucas S."/>
            <person name="Detter C."/>
            <person name="Zhulin I.B."/>
            <person name="Olsen G.J."/>
            <person name="Whitman W."/>
            <person name="Mukhopadhyay B."/>
            <person name="Bristow J."/>
            <person name="Kyrpides N."/>
        </authorList>
    </citation>
    <scope>NUCLEOTIDE SEQUENCE [LARGE SCALE GENOMIC DNA]</scope>
    <source>
        <strain>DSM 2475 / Hrk 5</strain>
    </source>
</reference>
<feature type="chain" id="PRO_0000310059" description="Large ribosomal subunit protein uL2">
    <location>
        <begin position="1"/>
        <end position="248"/>
    </location>
</feature>
<feature type="region of interest" description="Disordered" evidence="2">
    <location>
        <begin position="203"/>
        <end position="248"/>
    </location>
</feature>
<feature type="compositionally biased region" description="Basic residues" evidence="2">
    <location>
        <begin position="227"/>
        <end position="242"/>
    </location>
</feature>
<organism>
    <name type="scientific">Thermofilum pendens (strain DSM 2475 / Hrk 5)</name>
    <dbReference type="NCBI Taxonomy" id="368408"/>
    <lineage>
        <taxon>Archaea</taxon>
        <taxon>Thermoproteota</taxon>
        <taxon>Thermoprotei</taxon>
        <taxon>Thermofilales</taxon>
        <taxon>Thermofilaceae</taxon>
        <taxon>Thermofilum</taxon>
    </lineage>
</organism>
<evidence type="ECO:0000255" key="1">
    <source>
        <dbReference type="HAMAP-Rule" id="MF_01320"/>
    </source>
</evidence>
<evidence type="ECO:0000256" key="2">
    <source>
        <dbReference type="SAM" id="MobiDB-lite"/>
    </source>
</evidence>
<evidence type="ECO:0000305" key="3"/>
<accession>A1RWQ7</accession>